<keyword id="KW-0002">3D-structure</keyword>
<keyword id="KW-1003">Cell membrane</keyword>
<keyword id="KW-0966">Cell projection</keyword>
<keyword id="KW-0225">Disease variant</keyword>
<keyword id="KW-1015">Disulfide bond</keyword>
<keyword id="KW-1023">Dystonia</keyword>
<keyword id="KW-0325">Glycoprotein</keyword>
<keyword id="KW-0472">Membrane</keyword>
<keyword id="KW-0479">Metal-binding</keyword>
<keyword id="KW-0523">Neurodegeneration</keyword>
<keyword id="KW-0532">Neurotransmitter transport</keyword>
<keyword id="KW-0908">Parkinsonism</keyword>
<keyword id="KW-1267">Proteomics identification</keyword>
<keyword id="KW-1185">Reference proteome</keyword>
<keyword id="KW-0915">Sodium</keyword>
<keyword id="KW-0769">Symport</keyword>
<keyword id="KW-0812">Transmembrane</keyword>
<keyword id="KW-1133">Transmembrane helix</keyword>
<keyword id="KW-0813">Transport</keyword>
<proteinExistence type="evidence at protein level"/>
<name>SC6A3_HUMAN</name>
<comment type="function">
    <text evidence="1 2 4 6 9 10 13 16 17 18 20">Mediates sodium- and chloride-dependent transport of dopamine (PubMed:10375632, PubMed:11093780, PubMed:1406597, PubMed:15505207, PubMed:19478460, PubMed:39112701, PubMed:39112703, PubMed:39112705, PubMed:8302271). Also mediates sodium- and chloride-dependent transport of norepinephrine (also known as noradrenaline) (By similarity). Regulator of light-dependent retinal hyaloid vessel regression, downstream of OPN5 signaling (By similarity).</text>
</comment>
<comment type="catalytic activity">
    <reaction evidence="4 6 9 10 13 17 18 20">
        <text>dopamine(out) + chloride(out) + Na(+)(out) = dopamine(in) + chloride(in) + Na(+)(in)</text>
        <dbReference type="Rhea" id="RHEA:70919"/>
        <dbReference type="ChEBI" id="CHEBI:17996"/>
        <dbReference type="ChEBI" id="CHEBI:29101"/>
        <dbReference type="ChEBI" id="CHEBI:59905"/>
    </reaction>
</comment>
<comment type="catalytic activity">
    <reaction evidence="16">
        <text>dopamine(out) + chloride(out) + 2 Na(+)(out) = dopamine(in) + chloride(in) + 2 Na(+)(in)</text>
        <dbReference type="Rhea" id="RHEA:70931"/>
        <dbReference type="ChEBI" id="CHEBI:17996"/>
        <dbReference type="ChEBI" id="CHEBI:29101"/>
        <dbReference type="ChEBI" id="CHEBI:59905"/>
    </reaction>
</comment>
<comment type="catalytic activity">
    <reaction evidence="1">
        <text>(R)-noradrenaline(out) + chloride(out) + Na(+)(out) = (R)-noradrenaline(in) + chloride(in) + Na(+)(in)</text>
        <dbReference type="Rhea" id="RHEA:70923"/>
        <dbReference type="ChEBI" id="CHEBI:17996"/>
        <dbReference type="ChEBI" id="CHEBI:29101"/>
        <dbReference type="ChEBI" id="CHEBI:72587"/>
    </reaction>
</comment>
<comment type="activity regulation">
    <text evidence="9 16 17 18 20">Inhibited by cocaine, which occupies the same binding site as dopamine (PubMed:1406597, PubMed:39112701, PubMed:39112703, PubMed:39112705, PubMed:8302271). Inhibited by zinc ions (PubMed:39112705). Enhanced by the antibiotic valinomycin (PubMed:39112703). Inhibited by benztropine (PubMed:39112701, PubMed:39112705). Inhibited by GBR 12909 dihydrochloride and amphetamine (PubMed:1406597, PubMed:39112701, PubMed:8302271). Inhibited by mazindol, GBR 12783 dihydrochloride, nomifensine, diclofensine, amfonelic acid, Lu 19005, Win-35428, bupropion and ritalin (PubMed:1406597, PubMed:8302271).</text>
</comment>
<comment type="biophysicochemical properties">
    <kinetics>
        <KM evidence="6">58 mM for Na(+) in dopamine transport</KM>
        <KM evidence="6">53 mM for Cl(-) in dopamine transport</KM>
        <KM evidence="9">1.2 uM for dopamine</KM>
        <KM evidence="4 20">2.4 uM for dopamine</KM>
        <KM evidence="10">2.5 uM for dopamine</KM>
    </kinetics>
</comment>
<comment type="subunit">
    <text evidence="2 7 8 10 15 16 17 18 21">Monomer (PubMed:39112701, PubMed:39112703, PubMed:39112705). Homooligomer; disulfide-linked (Ref.16). Interacts with PRKCABP and TGFB1I1 (PubMed:11343649, PubMed:12177201). Interacts (via N-terminus) with SYNGR3 (via N-terminus) (By similarity). Interacts with SLC18A2 (By similarity). Interacts with TOR1A (ATP-bound); TOR1A regulates SLC6A3 subcellular location (PubMed:15505207). Interacts with alpha-synuclein/SNCA (PubMed:26442590). Interacts with SEPTIN4 (By similarity).</text>
</comment>
<comment type="interaction">
    <interactant intactId="EBI-6661445">
        <id>Q01959</id>
    </interactant>
    <interactant intactId="EBI-2928178">
        <id>P14416</id>
        <label>DRD2</label>
    </interactant>
    <organismsDiffer>false</organismsDiffer>
    <experiments>4</experiments>
</comment>
<comment type="interaction">
    <interactant intactId="EBI-6661445">
        <id>Q01959</id>
    </interactant>
    <interactant intactId="EBI-15639515">
        <id>O15354</id>
        <label>GPR37</label>
    </interactant>
    <organismsDiffer>false</organismsDiffer>
    <experiments>2</experiments>
</comment>
<comment type="interaction">
    <interactant intactId="EBI-6661445">
        <id>Q01959</id>
    </interactant>
    <interactant intactId="EBI-365914">
        <id>Q99578</id>
        <label>RIT2</label>
    </interactant>
    <organismsDiffer>false</organismsDiffer>
    <experiments>5</experiments>
</comment>
<comment type="interaction">
    <interactant intactId="EBI-6661445">
        <id>Q01959</id>
    </interactant>
    <interactant intactId="EBI-985879">
        <id>P37840</id>
        <label>SNCA</label>
    </interactant>
    <organismsDiffer>false</organismsDiffer>
    <experiments>3</experiments>
</comment>
<comment type="interaction">
    <interactant intactId="EBI-6661445">
        <id>Q01959</id>
    </interactant>
    <interactant intactId="EBI-2868748">
        <id>Q5T9L3</id>
        <label>WLS</label>
    </interactant>
    <organismsDiffer>false</organismsDiffer>
    <experiments>2</experiments>
</comment>
<comment type="interaction">
    <interactant intactId="EBI-6661445">
        <id>Q01959</id>
    </interactant>
    <interactant intactId="EBI-77728">
        <id>Q9EP80</id>
        <label>Pick1</label>
    </interactant>
    <organismsDiffer>true</organismsDiffer>
    <experiments>2</experiments>
</comment>
<comment type="interaction">
    <interactant intactId="EBI-6661445">
        <id>Q01959</id>
    </interactant>
    <interactant intactId="EBI-11686902">
        <id>Q5BJQ5</id>
        <label>Rit2</label>
    </interactant>
    <organismsDiffer>true</organismsDiffer>
    <experiments>2</experiments>
</comment>
<comment type="subcellular location">
    <subcellularLocation>
        <location evidence="7 10 16">Cell membrane</location>
        <topology evidence="16 17 18">Multi-pass membrane protein</topology>
    </subcellularLocation>
    <subcellularLocation>
        <location evidence="1">Cell projection</location>
        <location evidence="1">Neuron projection</location>
    </subcellularLocation>
    <subcellularLocation>
        <location evidence="12">Cell projection</location>
        <location evidence="12">Axon</location>
    </subcellularLocation>
    <text evidence="1 2">Localizes to neurite tips in neuronal cells (By similarity). Colocalizes with SEPTIN4 at axon terminals, especially at the varicosities (By similarity).</text>
</comment>
<comment type="tissue specificity">
    <text evidence="12 19">Highly expressed in substantia nigra (PubMed:7637582). Expressed in axonal varicosities in dopaminergic nerve terminals (at protein level) (PubMed:17296554). Expressed in the striatum (at protein level) (PubMed:17296554).</text>
</comment>
<comment type="disease" evidence="13">
    <disease id="DI-02782">
        <name>Parkinsonism-dystonia 1, infantile-onset</name>
        <acronym>PKDYS1</acronym>
        <description>An autosomal recessive neurodegenerative disorder characterized by infantile onset of parkinsonism and dystonia. Other neurologic features include global developmental delay, bradykinesia and pyramidal tract signs.</description>
        <dbReference type="MIM" id="613135"/>
    </disease>
    <text>The disease is caused by variants affecting the gene represented in this entry.</text>
</comment>
<comment type="miscellaneous">
    <text>This protein is the target of psychomotor stimulants such as amphetamines or cocaine.</text>
</comment>
<comment type="similarity">
    <text evidence="25">Belongs to the sodium:neurotransmitter symporter (SNF) (TC 2.A.22) family. SLC6A3 subfamily.</text>
</comment>
<comment type="online information" name="Wikipedia">
    <link uri="https://en.wikipedia.org/wiki/Dopamine_transporter"/>
    <text>Dopamine transporter entry</text>
</comment>
<organism>
    <name type="scientific">Homo sapiens</name>
    <name type="common">Human</name>
    <dbReference type="NCBI Taxonomy" id="9606"/>
    <lineage>
        <taxon>Eukaryota</taxon>
        <taxon>Metazoa</taxon>
        <taxon>Chordata</taxon>
        <taxon>Craniata</taxon>
        <taxon>Vertebrata</taxon>
        <taxon>Euteleostomi</taxon>
        <taxon>Mammalia</taxon>
        <taxon>Eutheria</taxon>
        <taxon>Euarchontoglires</taxon>
        <taxon>Primates</taxon>
        <taxon>Haplorrhini</taxon>
        <taxon>Catarrhini</taxon>
        <taxon>Hominidae</taxon>
        <taxon>Homo</taxon>
    </lineage>
</organism>
<accession>Q01959</accession>
<accession>A2RUN4</accession>
<accession>Q14996</accession>
<sequence>MSKSKCSVGLMSSVVAPAKEPNAVGPKEVELILVKEQNGVQLTSSTLTNPRQSPVEAQDRETWGKKIDFLLSVIGFAVDLANVWRFPYLCYKNGGGAFLVPYLLFMVIAGMPLFYMELALGQFNREGAAGVWKICPILKGVGFTVILISLYVGFFYNVIIAWALHYLFSSFTTELPWIHCNNSWNSPNCSDAHPGDSSGDSSGLNDTFGTTPAAEYFERGVLHLHQSHGIDDLGPPRWQLTACLVLVIVLLYFSLWKGVKTSGKVVWITATMPYVVLTALLLRGVTLPGAIDGIRAYLSVDFYRLCEASVWIDAATQVCFSLGVGFGVLIAFSSYNKFTNNCYRDAIVTTSINSLTSFSSGFVVFSFLGYMAQKHSVPIGDVAKDGPGLIFIIYPEAIATLPLSSAWAVVFFIMLLTLGIDSAMGGMESVITGLIDEFQLLHRHRELFTLFIVLATFLLSLFCVTNGGIYVFTLLDHFAAGTSILFGVLIEAIGVAWFYGVGQFSDDIQQMTGQRPSLYWRLCWKLVSPCFLLFVVVVSIVTFRPPHYGAYIFPDWANALGWVIATSSMAMVPIYAAYKFCSLPGSFREKLAYAIAPEKDRELVDRGEVRQFTLRHWLKV</sequence>
<evidence type="ECO:0000250" key="1">
    <source>
        <dbReference type="UniProtKB" id="P23977"/>
    </source>
</evidence>
<evidence type="ECO:0000250" key="2">
    <source>
        <dbReference type="UniProtKB" id="Q61327"/>
    </source>
</evidence>
<evidence type="ECO:0000255" key="3"/>
<evidence type="ECO:0000269" key="4">
    <source>
    </source>
</evidence>
<evidence type="ECO:0000269" key="5">
    <source>
    </source>
</evidence>
<evidence type="ECO:0000269" key="6">
    <source>
    </source>
</evidence>
<evidence type="ECO:0000269" key="7">
    <source>
    </source>
</evidence>
<evidence type="ECO:0000269" key="8">
    <source>
    </source>
</evidence>
<evidence type="ECO:0000269" key="9">
    <source>
    </source>
</evidence>
<evidence type="ECO:0000269" key="10">
    <source>
    </source>
</evidence>
<evidence type="ECO:0000269" key="11">
    <source>
    </source>
</evidence>
<evidence type="ECO:0000269" key="12">
    <source>
    </source>
</evidence>
<evidence type="ECO:0000269" key="13">
    <source>
    </source>
</evidence>
<evidence type="ECO:0000269" key="14">
    <source>
    </source>
</evidence>
<evidence type="ECO:0000269" key="15">
    <source>
    </source>
</evidence>
<evidence type="ECO:0000269" key="16">
    <source>
    </source>
</evidence>
<evidence type="ECO:0000269" key="17">
    <source>
    </source>
</evidence>
<evidence type="ECO:0000269" key="18">
    <source>
    </source>
</evidence>
<evidence type="ECO:0000269" key="19">
    <source>
    </source>
</evidence>
<evidence type="ECO:0000269" key="20">
    <source>
    </source>
</evidence>
<evidence type="ECO:0000269" key="21">
    <source ref="16"/>
</evidence>
<evidence type="ECO:0000303" key="22">
    <source>
    </source>
</evidence>
<evidence type="ECO:0000303" key="23">
    <source>
    </source>
</evidence>
<evidence type="ECO:0000303" key="24">
    <source>
    </source>
</evidence>
<evidence type="ECO:0000305" key="25"/>
<evidence type="ECO:0007744" key="26">
    <source>
        <dbReference type="PDB" id="8VBY"/>
    </source>
</evidence>
<evidence type="ECO:0007744" key="27">
    <source>
        <dbReference type="PDB" id="8Y2C"/>
    </source>
</evidence>
<evidence type="ECO:0007744" key="28">
    <source>
        <dbReference type="PDB" id="8Y2D"/>
    </source>
</evidence>
<evidence type="ECO:0007744" key="29">
    <source>
        <dbReference type="PDB" id="8Y2E"/>
    </source>
</evidence>
<evidence type="ECO:0007744" key="30">
    <source>
        <dbReference type="PDB" id="8Y2F"/>
    </source>
</evidence>
<evidence type="ECO:0007744" key="31">
    <source>
        <dbReference type="PDB" id="8Y2G"/>
    </source>
</evidence>
<evidence type="ECO:0007744" key="32">
    <source>
        <dbReference type="PDB" id="9EO4"/>
    </source>
</evidence>
<evidence type="ECO:0007829" key="33">
    <source>
        <dbReference type="PDB" id="8Y2D"/>
    </source>
</evidence>
<evidence type="ECO:0007829" key="34">
    <source>
        <dbReference type="PDB" id="8Y2E"/>
    </source>
</evidence>
<evidence type="ECO:0007829" key="35">
    <source>
        <dbReference type="PDB" id="9EO4"/>
    </source>
</evidence>
<dbReference type="EMBL" id="M95167">
    <property type="protein sequence ID" value="AAC41720.1"/>
    <property type="molecule type" value="mRNA"/>
</dbReference>
<dbReference type="EMBL" id="S46955">
    <property type="protein sequence ID" value="AAA11754.1"/>
    <property type="molecule type" value="mRNA"/>
</dbReference>
<dbReference type="EMBL" id="S44626">
    <property type="protein sequence ID" value="AAB23443.1"/>
    <property type="molecule type" value="mRNA"/>
</dbReference>
<dbReference type="EMBL" id="L24178">
    <property type="protein sequence ID" value="AAA19560.1"/>
    <property type="molecule type" value="mRNA"/>
</dbReference>
<dbReference type="EMBL" id="D88570">
    <property type="protein sequence ID" value="BAA22511.1"/>
    <property type="molecule type" value="Genomic_DNA"/>
</dbReference>
<dbReference type="EMBL" id="AF119117">
    <property type="protein sequence ID" value="AAC50179.2"/>
    <property type="molecule type" value="Genomic_DNA"/>
</dbReference>
<dbReference type="EMBL" id="AF321321">
    <property type="protein sequence ID" value="AAG33844.1"/>
    <property type="molecule type" value="Genomic_DNA"/>
</dbReference>
<dbReference type="EMBL" id="AF306558">
    <property type="protein sequence ID" value="AAG33844.1"/>
    <property type="status" value="JOINED"/>
    <property type="molecule type" value="Genomic_DNA"/>
</dbReference>
<dbReference type="EMBL" id="AF321320">
    <property type="protein sequence ID" value="AAG33844.1"/>
    <property type="status" value="JOINED"/>
    <property type="molecule type" value="Genomic_DNA"/>
</dbReference>
<dbReference type="EMBL" id="AF306559">
    <property type="protein sequence ID" value="AAG33844.1"/>
    <property type="status" value="JOINED"/>
    <property type="molecule type" value="Genomic_DNA"/>
</dbReference>
<dbReference type="EMBL" id="AF306560">
    <property type="protein sequence ID" value="AAG33844.1"/>
    <property type="status" value="JOINED"/>
    <property type="molecule type" value="Genomic_DNA"/>
</dbReference>
<dbReference type="EMBL" id="AF306561">
    <property type="protein sequence ID" value="AAG33844.1"/>
    <property type="status" value="JOINED"/>
    <property type="molecule type" value="Genomic_DNA"/>
</dbReference>
<dbReference type="EMBL" id="AF306562">
    <property type="protein sequence ID" value="AAG33844.1"/>
    <property type="status" value="JOINED"/>
    <property type="molecule type" value="Genomic_DNA"/>
</dbReference>
<dbReference type="EMBL" id="AF306563">
    <property type="protein sequence ID" value="AAG33844.1"/>
    <property type="status" value="JOINED"/>
    <property type="molecule type" value="Genomic_DNA"/>
</dbReference>
<dbReference type="EMBL" id="AF306564">
    <property type="protein sequence ID" value="AAG33844.1"/>
    <property type="status" value="JOINED"/>
    <property type="molecule type" value="Genomic_DNA"/>
</dbReference>
<dbReference type="EMBL" id="EF174603">
    <property type="protein sequence ID" value="ABO77644.1"/>
    <property type="molecule type" value="mRNA"/>
</dbReference>
<dbReference type="EMBL" id="AY623110">
    <property type="protein sequence ID" value="AAT38106.1"/>
    <property type="molecule type" value="Genomic_DNA"/>
</dbReference>
<dbReference type="EMBL" id="CH471102">
    <property type="protein sequence ID" value="EAX08159.1"/>
    <property type="molecule type" value="Genomic_DNA"/>
</dbReference>
<dbReference type="EMBL" id="BC132977">
    <property type="protein sequence ID" value="AAI32978.1"/>
    <property type="molecule type" value="mRNA"/>
</dbReference>
<dbReference type="EMBL" id="BC133003">
    <property type="protein sequence ID" value="AAI33004.1"/>
    <property type="molecule type" value="mRNA"/>
</dbReference>
<dbReference type="EMBL" id="M96670">
    <property type="protein sequence ID" value="AAA35770.1"/>
    <property type="molecule type" value="mRNA"/>
</dbReference>
<dbReference type="CCDS" id="CCDS3863.1"/>
<dbReference type="PIR" id="A48980">
    <property type="entry name" value="A48980"/>
</dbReference>
<dbReference type="PIR" id="I57937">
    <property type="entry name" value="I57937"/>
</dbReference>
<dbReference type="PIR" id="I84455">
    <property type="entry name" value="I84455"/>
</dbReference>
<dbReference type="RefSeq" id="NP_001035.1">
    <property type="nucleotide sequence ID" value="NM_001044.5"/>
</dbReference>
<dbReference type="PDB" id="8VBY">
    <property type="method" value="EM"/>
    <property type="resolution" value="3.19 A"/>
    <property type="chains" value="A=57-620"/>
</dbReference>
<dbReference type="PDB" id="8Y2C">
    <property type="method" value="EM"/>
    <property type="resolution" value="3.16 A"/>
    <property type="chains" value="A=66-620"/>
</dbReference>
<dbReference type="PDB" id="8Y2D">
    <property type="method" value="EM"/>
    <property type="resolution" value="2.80 A"/>
    <property type="chains" value="A=68-620"/>
</dbReference>
<dbReference type="PDB" id="8Y2E">
    <property type="method" value="EM"/>
    <property type="resolution" value="3.03 A"/>
    <property type="chains" value="A=66-620"/>
</dbReference>
<dbReference type="PDB" id="8Y2F">
    <property type="method" value="EM"/>
    <property type="resolution" value="2.97 A"/>
    <property type="chains" value="A=66-620"/>
</dbReference>
<dbReference type="PDB" id="8Y2G">
    <property type="method" value="EM"/>
    <property type="resolution" value="2.83 A"/>
    <property type="chains" value="A=59-620"/>
</dbReference>
<dbReference type="PDB" id="9EO4">
    <property type="method" value="EM"/>
    <property type="resolution" value="2.66 A"/>
    <property type="chains" value="B=1-620"/>
</dbReference>
<dbReference type="PDBsum" id="8VBY"/>
<dbReference type="PDBsum" id="8Y2C"/>
<dbReference type="PDBsum" id="8Y2D"/>
<dbReference type="PDBsum" id="8Y2E"/>
<dbReference type="PDBsum" id="8Y2F"/>
<dbReference type="PDBsum" id="8Y2G"/>
<dbReference type="PDBsum" id="9EO4"/>
<dbReference type="EMDB" id="EMD-19845"/>
<dbReference type="EMDB" id="EMD-38850"/>
<dbReference type="EMDB" id="EMD-38851"/>
<dbReference type="EMDB" id="EMD-38852"/>
<dbReference type="EMDB" id="EMD-38853"/>
<dbReference type="EMDB" id="EMD-38854"/>
<dbReference type="EMDB" id="EMD-43128"/>
<dbReference type="SMR" id="Q01959"/>
<dbReference type="BioGRID" id="112422">
    <property type="interactions" value="23"/>
</dbReference>
<dbReference type="CORUM" id="Q01959"/>
<dbReference type="DIP" id="DIP-41827N"/>
<dbReference type="FunCoup" id="Q01959">
    <property type="interactions" value="234"/>
</dbReference>
<dbReference type="IntAct" id="Q01959">
    <property type="interactions" value="9"/>
</dbReference>
<dbReference type="MINT" id="Q01959"/>
<dbReference type="STRING" id="9606.ENSP00000270349"/>
<dbReference type="BindingDB" id="Q01959"/>
<dbReference type="ChEMBL" id="CHEMBL238"/>
<dbReference type="DrugBank" id="DB01472">
    <property type="generic name" value="4-Methoxyamphetamine"/>
</dbReference>
<dbReference type="DrugBank" id="DB04947">
    <property type="generic name" value="Altropane"/>
</dbReference>
<dbReference type="DrugBank" id="DB04836">
    <property type="generic name" value="Amineptine"/>
</dbReference>
<dbReference type="DrugBank" id="DB05964">
    <property type="generic name" value="Amitifadine"/>
</dbReference>
<dbReference type="DrugBank" id="DB00543">
    <property type="generic name" value="Amoxapine"/>
</dbReference>
<dbReference type="DrugBank" id="DB00182">
    <property type="generic name" value="Amphetamine"/>
</dbReference>
<dbReference type="DrugBank" id="DB01238">
    <property type="generic name" value="Aripiprazole"/>
</dbReference>
<dbReference type="DrugBank" id="DB06413">
    <property type="generic name" value="Armodafinil"/>
</dbReference>
<dbReference type="DrugBank" id="DB00245">
    <property type="generic name" value="Benzatropine"/>
</dbReference>
<dbReference type="DrugBank" id="DB00865">
    <property type="generic name" value="Benzphetamine"/>
</dbReference>
<dbReference type="DrugBank" id="DB01156">
    <property type="generic name" value="Bupropion"/>
</dbReference>
<dbReference type="DrugBank" id="DB01161">
    <property type="generic name" value="Chloroprocaine"/>
</dbReference>
<dbReference type="DrugBank" id="DB01114">
    <property type="generic name" value="Chlorpheniramine"/>
</dbReference>
<dbReference type="DrugBank" id="DB00907">
    <property type="generic name" value="Cocaine"/>
</dbReference>
<dbReference type="DrugBank" id="DB12305">
    <property type="generic name" value="Dasotraline"/>
</dbReference>
<dbReference type="DrugBank" id="DB06700">
    <property type="generic name" value="Desvenlafaxine"/>
</dbReference>
<dbReference type="DrugBank" id="DB06701">
    <property type="generic name" value="Dexmethylphenidate"/>
</dbReference>
<dbReference type="DrugBank" id="DB01576">
    <property type="generic name" value="Dextroamphetamine"/>
</dbReference>
<dbReference type="DrugBank" id="DB00937">
    <property type="generic name" value="Diethylpropion"/>
</dbReference>
<dbReference type="DrugBank" id="DB01146">
    <property type="generic name" value="Diphenylpyraline"/>
</dbReference>
<dbReference type="DrugBank" id="DB00988">
    <property type="generic name" value="Dopamine"/>
</dbReference>
<dbReference type="DrugBank" id="DB00476">
    <property type="generic name" value="Duloxetine"/>
</dbReference>
<dbReference type="DrugBank" id="DB01363">
    <property type="generic name" value="Ephedra sinica root"/>
</dbReference>
<dbReference type="DrugBank" id="DB01175">
    <property type="generic name" value="Escitalopram"/>
</dbReference>
<dbReference type="DrugBank" id="DB09194">
    <property type="generic name" value="Etoperidone"/>
</dbReference>
<dbReference type="DrugBank" id="DB01463">
    <property type="generic name" value="Fencamfamin"/>
</dbReference>
<dbReference type="DrugBank" id="DB00458">
    <property type="generic name" value="Imipramine"/>
</dbReference>
<dbReference type="DrugBank" id="DB17032">
    <property type="generic name" value="Indatraline"/>
</dbReference>
<dbReference type="DrugBank" id="DB08824">
    <property type="generic name" value="Ioflupane I-123"/>
</dbReference>
<dbReference type="DrugBank" id="DB00408">
    <property type="generic name" value="Loxapine"/>
</dbReference>
<dbReference type="DrugBank" id="DB00579">
    <property type="generic name" value="Mazindol"/>
</dbReference>
<dbReference type="DrugBank" id="DB00454">
    <property type="generic name" value="Meperidine"/>
</dbReference>
<dbReference type="DrugBank" id="DB01577">
    <property type="generic name" value="Metamfetamine"/>
</dbReference>
<dbReference type="DrugBank" id="DB00422">
    <property type="generic name" value="Methylphenidate"/>
</dbReference>
<dbReference type="DrugBank" id="DB06148">
    <property type="generic name" value="Mianserin"/>
</dbReference>
<dbReference type="DrugBank" id="DB01454">
    <property type="generic name" value="Midomafetamine"/>
</dbReference>
<dbReference type="DrugBank" id="DB01442">
    <property type="generic name" value="MMDA"/>
</dbReference>
<dbReference type="DrugBank" id="DB00745">
    <property type="generic name" value="Modafinil"/>
</dbReference>
<dbReference type="DrugBank" id="DB01149">
    <property type="generic name" value="Nefazodone"/>
</dbReference>
<dbReference type="DrugBank" id="DB09186">
    <property type="generic name" value="Nisoxetine"/>
</dbReference>
<dbReference type="DrugBank" id="DB04821">
    <property type="generic name" value="Nomifensine"/>
</dbReference>
<dbReference type="DrugBank" id="DB05805">
    <property type="generic name" value="NS-2359"/>
</dbReference>
<dbReference type="DrugBank" id="DB00830">
    <property type="generic name" value="Phenmetrazine"/>
</dbReference>
<dbReference type="DrugBank" id="DB00191">
    <property type="generic name" value="Phentermine"/>
</dbReference>
<dbReference type="DrugBank" id="DB00721">
    <property type="generic name" value="Procaine"/>
</dbReference>
<dbReference type="DrugBank" id="DB00852">
    <property type="generic name" value="Pseudoephedrine"/>
</dbReference>
<dbReference type="DrugBank" id="DB11790">
    <property type="generic name" value="Radafaxine"/>
</dbReference>
<dbReference type="DrugBank" id="DB06731">
    <property type="generic name" value="Seproxetine"/>
</dbReference>
<dbReference type="DrugBank" id="DB16629">
    <property type="generic name" value="Serdexmethylphenidate"/>
</dbReference>
<dbReference type="DrugBank" id="DB01104">
    <property type="generic name" value="Sertraline"/>
</dbReference>
<dbReference type="DrugBank" id="DB01105">
    <property type="generic name" value="Sibutramine"/>
</dbReference>
<dbReference type="DrugBank" id="DB14754">
    <property type="generic name" value="Solriamfetol"/>
</dbReference>
<dbReference type="DrugBank" id="DB01509">
    <property type="generic name" value="Tenamfetamine"/>
</dbReference>
<dbReference type="DrugBank" id="DB06156">
    <property type="generic name" value="Tesofensine"/>
</dbReference>
<dbReference type="DrugBank" id="DB00726">
    <property type="generic name" value="Trimipramine"/>
</dbReference>
<dbReference type="DrugBank" id="DB06333">
    <property type="generic name" value="Trodusquemine"/>
</dbReference>
<dbReference type="DrugBank" id="DB03701">
    <property type="generic name" value="Vanoxerine"/>
</dbReference>
<dbReference type="DrugBank" id="DB00285">
    <property type="generic name" value="Venlafaxine"/>
</dbReference>
<dbReference type="DrugCentral" id="Q01959"/>
<dbReference type="GuidetoPHARMACOLOGY" id="927"/>
<dbReference type="TCDB" id="2.A.22.1.3">
    <property type="family name" value="the neurotransmitter:sodium symporter (nss) family"/>
</dbReference>
<dbReference type="GlyCosmos" id="Q01959">
    <property type="glycosylation" value="3 sites, No reported glycans"/>
</dbReference>
<dbReference type="GlyGen" id="Q01959">
    <property type="glycosylation" value="3 sites"/>
</dbReference>
<dbReference type="iPTMnet" id="Q01959"/>
<dbReference type="PhosphoSitePlus" id="Q01959"/>
<dbReference type="SwissPalm" id="Q01959"/>
<dbReference type="BioMuta" id="SLC6A3"/>
<dbReference type="DMDM" id="266667"/>
<dbReference type="jPOST" id="Q01959"/>
<dbReference type="MassIVE" id="Q01959"/>
<dbReference type="PaxDb" id="9606-ENSP00000270349"/>
<dbReference type="PeptideAtlas" id="Q01959"/>
<dbReference type="Antibodypedia" id="2799">
    <property type="antibodies" value="455 antibodies from 45 providers"/>
</dbReference>
<dbReference type="DNASU" id="6531"/>
<dbReference type="Ensembl" id="ENST00000270349.12">
    <property type="protein sequence ID" value="ENSP00000270349.9"/>
    <property type="gene ID" value="ENSG00000142319.19"/>
</dbReference>
<dbReference type="Ensembl" id="ENST00000621716.2">
    <property type="protein sequence ID" value="ENSP00000479597.1"/>
    <property type="gene ID" value="ENSG00000276996.2"/>
</dbReference>
<dbReference type="GeneID" id="6531"/>
<dbReference type="KEGG" id="hsa:6531"/>
<dbReference type="MANE-Select" id="ENST00000270349.12">
    <property type="protein sequence ID" value="ENSP00000270349.9"/>
    <property type="RefSeq nucleotide sequence ID" value="NM_001044.5"/>
    <property type="RefSeq protein sequence ID" value="NP_001035.1"/>
</dbReference>
<dbReference type="UCSC" id="uc003jck.4">
    <property type="organism name" value="human"/>
</dbReference>
<dbReference type="AGR" id="HGNC:11049"/>
<dbReference type="CTD" id="6531"/>
<dbReference type="DisGeNET" id="6531"/>
<dbReference type="GeneCards" id="SLC6A3"/>
<dbReference type="GeneReviews" id="SLC6A3"/>
<dbReference type="HGNC" id="HGNC:11049">
    <property type="gene designation" value="SLC6A3"/>
</dbReference>
<dbReference type="HPA" id="ENSG00000142319">
    <property type="expression patterns" value="Tissue enriched (brain)"/>
</dbReference>
<dbReference type="MalaCards" id="SLC6A3"/>
<dbReference type="MIM" id="126455">
    <property type="type" value="gene"/>
</dbReference>
<dbReference type="MIM" id="613135">
    <property type="type" value="phenotype"/>
</dbReference>
<dbReference type="neXtProt" id="NX_Q01959"/>
<dbReference type="OpenTargets" id="ENSG00000142319"/>
<dbReference type="Orphanet" id="238455">
    <property type="disease" value="Infantile dystonia-parkinsonism"/>
</dbReference>
<dbReference type="PharmGKB" id="PA311"/>
<dbReference type="VEuPathDB" id="HostDB:ENSG00000142319"/>
<dbReference type="eggNOG" id="KOG3659">
    <property type="taxonomic scope" value="Eukaryota"/>
</dbReference>
<dbReference type="GeneTree" id="ENSGT00940000161224"/>
<dbReference type="HOGENOM" id="CLU_006855_9_0_1"/>
<dbReference type="InParanoid" id="Q01959"/>
<dbReference type="OMA" id="LAWAMVY"/>
<dbReference type="OrthoDB" id="6581954at2759"/>
<dbReference type="PAN-GO" id="Q01959">
    <property type="GO annotations" value="9 GO annotations based on evolutionary models"/>
</dbReference>
<dbReference type="PhylomeDB" id="Q01959"/>
<dbReference type="TreeFam" id="TF343812"/>
<dbReference type="PathwayCommons" id="Q01959"/>
<dbReference type="Reactome" id="R-HSA-379401">
    <property type="pathway name" value="Dopamine clearance from the synaptic cleft"/>
</dbReference>
<dbReference type="Reactome" id="R-HSA-442660">
    <property type="pathway name" value="Na+/Cl- dependent neurotransmitter transporters"/>
</dbReference>
<dbReference type="Reactome" id="R-HSA-5619081">
    <property type="pathway name" value="Defective SLC6A3 causes Parkinsonism-dystonia infantile (PKDYS)"/>
</dbReference>
<dbReference type="Reactome" id="R-HSA-5660724">
    <property type="pathway name" value="Defective SLC6A3 causes Parkinsonism-dystonia infantile (PKDYS)"/>
</dbReference>
<dbReference type="SABIO-RK" id="Q01959"/>
<dbReference type="SignaLink" id="Q01959"/>
<dbReference type="SIGNOR" id="Q01959"/>
<dbReference type="BioGRID-ORCS" id="6531">
    <property type="hits" value="11 hits in 1153 CRISPR screens"/>
</dbReference>
<dbReference type="GeneWiki" id="Dopamine_transporter"/>
<dbReference type="GenomeRNAi" id="6531"/>
<dbReference type="Pharos" id="Q01959">
    <property type="development level" value="Tclin"/>
</dbReference>
<dbReference type="PRO" id="PR:Q01959"/>
<dbReference type="Proteomes" id="UP000005640">
    <property type="component" value="Chromosome 5"/>
</dbReference>
<dbReference type="RNAct" id="Q01959">
    <property type="molecule type" value="protein"/>
</dbReference>
<dbReference type="Bgee" id="ENSG00000142319">
    <property type="expression patterns" value="Expressed in substantia nigra and 64 other cell types or tissues"/>
</dbReference>
<dbReference type="GO" id="GO:0030424">
    <property type="term" value="C:axon"/>
    <property type="evidence" value="ECO:0000314"/>
    <property type="project" value="UniProtKB"/>
</dbReference>
<dbReference type="GO" id="GO:0043679">
    <property type="term" value="C:axon terminus"/>
    <property type="evidence" value="ECO:0007669"/>
    <property type="project" value="Ensembl"/>
</dbReference>
<dbReference type="GO" id="GO:0009986">
    <property type="term" value="C:cell surface"/>
    <property type="evidence" value="ECO:0000314"/>
    <property type="project" value="UniProtKB"/>
</dbReference>
<dbReference type="GO" id="GO:0005737">
    <property type="term" value="C:cytoplasm"/>
    <property type="evidence" value="ECO:0000304"/>
    <property type="project" value="ProtInc"/>
</dbReference>
<dbReference type="GO" id="GO:0098691">
    <property type="term" value="C:dopaminergic synapse"/>
    <property type="evidence" value="ECO:0007669"/>
    <property type="project" value="Ensembl"/>
</dbReference>
<dbReference type="GO" id="GO:0016600">
    <property type="term" value="C:flotillin complex"/>
    <property type="evidence" value="ECO:0000314"/>
    <property type="project" value="UniProtKB"/>
</dbReference>
<dbReference type="GO" id="GO:0016020">
    <property type="term" value="C:membrane"/>
    <property type="evidence" value="ECO:0000304"/>
    <property type="project" value="ProtInc"/>
</dbReference>
<dbReference type="GO" id="GO:0045121">
    <property type="term" value="C:membrane raft"/>
    <property type="evidence" value="ECO:0000314"/>
    <property type="project" value="ParkinsonsUK-UCL"/>
</dbReference>
<dbReference type="GO" id="GO:0043005">
    <property type="term" value="C:neuron projection"/>
    <property type="evidence" value="ECO:0000314"/>
    <property type="project" value="ParkinsonsUK-UCL"/>
</dbReference>
<dbReference type="GO" id="GO:0043025">
    <property type="term" value="C:neuronal cell body"/>
    <property type="evidence" value="ECO:0000314"/>
    <property type="project" value="UniProtKB"/>
</dbReference>
<dbReference type="GO" id="GO:0005886">
    <property type="term" value="C:plasma membrane"/>
    <property type="evidence" value="ECO:0000314"/>
    <property type="project" value="UniProtKB"/>
</dbReference>
<dbReference type="GO" id="GO:0045211">
    <property type="term" value="C:postsynaptic membrane"/>
    <property type="evidence" value="ECO:0007669"/>
    <property type="project" value="Ensembl"/>
</dbReference>
<dbReference type="GO" id="GO:0042734">
    <property type="term" value="C:presynaptic membrane"/>
    <property type="evidence" value="ECO:0007669"/>
    <property type="project" value="Ensembl"/>
</dbReference>
<dbReference type="GO" id="GO:0043176">
    <property type="term" value="F:amine binding"/>
    <property type="evidence" value="ECO:0007669"/>
    <property type="project" value="Ensembl"/>
</dbReference>
<dbReference type="GO" id="GO:0035240">
    <property type="term" value="F:dopamine binding"/>
    <property type="evidence" value="ECO:0007669"/>
    <property type="project" value="Ensembl"/>
</dbReference>
<dbReference type="GO" id="GO:0005330">
    <property type="term" value="F:dopamine:sodium symporter activity"/>
    <property type="evidence" value="ECO:0000314"/>
    <property type="project" value="UniProtKB"/>
</dbReference>
<dbReference type="GO" id="GO:1901363">
    <property type="term" value="F:heterocyclic compound binding"/>
    <property type="evidence" value="ECO:0007669"/>
    <property type="project" value="Ensembl"/>
</dbReference>
<dbReference type="GO" id="GO:0046872">
    <property type="term" value="F:metal ion binding"/>
    <property type="evidence" value="ECO:0007669"/>
    <property type="project" value="UniProtKB-KW"/>
</dbReference>
<dbReference type="GO" id="GO:0008504">
    <property type="term" value="F:monoamine transmembrane transporter activity"/>
    <property type="evidence" value="ECO:0000314"/>
    <property type="project" value="MGI"/>
</dbReference>
<dbReference type="GO" id="GO:0005326">
    <property type="term" value="F:neurotransmitter transmembrane transporter activity"/>
    <property type="evidence" value="ECO:0000250"/>
    <property type="project" value="ARUK-UCL"/>
</dbReference>
<dbReference type="GO" id="GO:0005334">
    <property type="term" value="F:norepinephrine:sodium symporter activity"/>
    <property type="evidence" value="ECO:0007669"/>
    <property type="project" value="Ensembl"/>
</dbReference>
<dbReference type="GO" id="GO:0002020">
    <property type="term" value="F:protease binding"/>
    <property type="evidence" value="ECO:0007669"/>
    <property type="project" value="Ensembl"/>
</dbReference>
<dbReference type="GO" id="GO:0051721">
    <property type="term" value="F:protein phosphatase 2A binding"/>
    <property type="evidence" value="ECO:0007669"/>
    <property type="project" value="Ensembl"/>
</dbReference>
<dbReference type="GO" id="GO:0044877">
    <property type="term" value="F:protein-containing complex binding"/>
    <property type="evidence" value="ECO:0007669"/>
    <property type="project" value="Ensembl"/>
</dbReference>
<dbReference type="GO" id="GO:0005102">
    <property type="term" value="F:signaling receptor binding"/>
    <property type="evidence" value="ECO:0007669"/>
    <property type="project" value="Ensembl"/>
</dbReference>
<dbReference type="GO" id="GO:0021984">
    <property type="term" value="P:adenohypophysis development"/>
    <property type="evidence" value="ECO:0007669"/>
    <property type="project" value="Ensembl"/>
</dbReference>
<dbReference type="GO" id="GO:0006865">
    <property type="term" value="P:amino acid transport"/>
    <property type="evidence" value="ECO:0000318"/>
    <property type="project" value="GO_Central"/>
</dbReference>
<dbReference type="GO" id="GO:0050890">
    <property type="term" value="P:cognition"/>
    <property type="evidence" value="ECO:0007669"/>
    <property type="project" value="Ensembl"/>
</dbReference>
<dbReference type="GO" id="GO:0042416">
    <property type="term" value="P:dopamine biosynthetic process"/>
    <property type="evidence" value="ECO:0007669"/>
    <property type="project" value="Ensembl"/>
</dbReference>
<dbReference type="GO" id="GO:0042420">
    <property type="term" value="P:dopamine catabolic process"/>
    <property type="evidence" value="ECO:0007669"/>
    <property type="project" value="Ensembl"/>
</dbReference>
<dbReference type="GO" id="GO:0015872">
    <property type="term" value="P:dopamine transport"/>
    <property type="evidence" value="ECO:0000314"/>
    <property type="project" value="UniProtKB"/>
</dbReference>
<dbReference type="GO" id="GO:0090494">
    <property type="term" value="P:dopamine uptake"/>
    <property type="evidence" value="ECO:0000314"/>
    <property type="project" value="ParkinsonsUK-UCL"/>
</dbReference>
<dbReference type="GO" id="GO:0051583">
    <property type="term" value="P:dopamine uptake involved in synaptic transmission"/>
    <property type="evidence" value="ECO:0000304"/>
    <property type="project" value="Reactome"/>
</dbReference>
<dbReference type="GO" id="GO:1990384">
    <property type="term" value="P:hyaloid vascular plexus regression"/>
    <property type="evidence" value="ECO:0000250"/>
    <property type="project" value="UniProtKB"/>
</dbReference>
<dbReference type="GO" id="GO:0007595">
    <property type="term" value="P:lactation"/>
    <property type="evidence" value="ECO:0007669"/>
    <property type="project" value="Ensembl"/>
</dbReference>
<dbReference type="GO" id="GO:0007626">
    <property type="term" value="P:locomotory behavior"/>
    <property type="evidence" value="ECO:0007669"/>
    <property type="project" value="Ensembl"/>
</dbReference>
<dbReference type="GO" id="GO:0015844">
    <property type="term" value="P:monoamine transport"/>
    <property type="evidence" value="ECO:0000314"/>
    <property type="project" value="MGI"/>
</dbReference>
<dbReference type="GO" id="GO:0006836">
    <property type="term" value="P:neurotransmitter transport"/>
    <property type="evidence" value="ECO:0000250"/>
    <property type="project" value="ARUK-UCL"/>
</dbReference>
<dbReference type="GO" id="GO:0040018">
    <property type="term" value="P:positive regulation of multicellular organism growth"/>
    <property type="evidence" value="ECO:0007669"/>
    <property type="project" value="Ensembl"/>
</dbReference>
<dbReference type="GO" id="GO:0060134">
    <property type="term" value="P:prepulse inhibition"/>
    <property type="evidence" value="ECO:0007669"/>
    <property type="project" value="Ensembl"/>
</dbReference>
<dbReference type="GO" id="GO:0042053">
    <property type="term" value="P:regulation of dopamine metabolic process"/>
    <property type="evidence" value="ECO:0007669"/>
    <property type="project" value="Ensembl"/>
</dbReference>
<dbReference type="GO" id="GO:0051591">
    <property type="term" value="P:response to cAMP"/>
    <property type="evidence" value="ECO:0007669"/>
    <property type="project" value="Ensembl"/>
</dbReference>
<dbReference type="GO" id="GO:0042220">
    <property type="term" value="P:response to cocaine"/>
    <property type="evidence" value="ECO:0007669"/>
    <property type="project" value="Ensembl"/>
</dbReference>
<dbReference type="GO" id="GO:0045471">
    <property type="term" value="P:response to ethanol"/>
    <property type="evidence" value="ECO:0007669"/>
    <property type="project" value="Ensembl"/>
</dbReference>
<dbReference type="GO" id="GO:0010039">
    <property type="term" value="P:response to iron ion"/>
    <property type="evidence" value="ECO:0007669"/>
    <property type="project" value="Ensembl"/>
</dbReference>
<dbReference type="GO" id="GO:0035094">
    <property type="term" value="P:response to nicotine"/>
    <property type="evidence" value="ECO:0007669"/>
    <property type="project" value="Ensembl"/>
</dbReference>
<dbReference type="GO" id="GO:0009410">
    <property type="term" value="P:response to xenobiotic stimulus"/>
    <property type="evidence" value="ECO:0007669"/>
    <property type="project" value="Ensembl"/>
</dbReference>
<dbReference type="GO" id="GO:0007608">
    <property type="term" value="P:sensory perception of smell"/>
    <property type="evidence" value="ECO:0007669"/>
    <property type="project" value="Ensembl"/>
</dbReference>
<dbReference type="GO" id="GO:0035725">
    <property type="term" value="P:sodium ion transmembrane transport"/>
    <property type="evidence" value="ECO:0000318"/>
    <property type="project" value="GO_Central"/>
</dbReference>
<dbReference type="CDD" id="cd11514">
    <property type="entry name" value="SLC6sbd_DAT1"/>
    <property type="match status" value="1"/>
</dbReference>
<dbReference type="InterPro" id="IPR000175">
    <property type="entry name" value="Na/ntran_symport"/>
</dbReference>
<dbReference type="InterPro" id="IPR002436">
    <property type="entry name" value="Na/ntran_symport_dopamine"/>
</dbReference>
<dbReference type="InterPro" id="IPR037272">
    <property type="entry name" value="SNS_sf"/>
</dbReference>
<dbReference type="NCBIfam" id="NF037979">
    <property type="entry name" value="Na_transp"/>
    <property type="match status" value="1"/>
</dbReference>
<dbReference type="PANTHER" id="PTHR11616:SF38">
    <property type="entry name" value="SODIUM-DEPENDENT DOPAMINE TRANSPORTER"/>
    <property type="match status" value="1"/>
</dbReference>
<dbReference type="PANTHER" id="PTHR11616">
    <property type="entry name" value="SODIUM/CHLORIDE DEPENDENT TRANSPORTER"/>
    <property type="match status" value="1"/>
</dbReference>
<dbReference type="Pfam" id="PF00209">
    <property type="entry name" value="SNF"/>
    <property type="match status" value="1"/>
</dbReference>
<dbReference type="PRINTS" id="PR01202">
    <property type="entry name" value="DOPTRANSPORT"/>
</dbReference>
<dbReference type="PRINTS" id="PR00176">
    <property type="entry name" value="NANEUSMPORT"/>
</dbReference>
<dbReference type="SUPFAM" id="SSF161070">
    <property type="entry name" value="SNF-like"/>
    <property type="match status" value="1"/>
</dbReference>
<dbReference type="PROSITE" id="PS00610">
    <property type="entry name" value="NA_NEUROTRAN_SYMP_1"/>
    <property type="match status" value="1"/>
</dbReference>
<dbReference type="PROSITE" id="PS00754">
    <property type="entry name" value="NA_NEUROTRAN_SYMP_2"/>
    <property type="match status" value="1"/>
</dbReference>
<dbReference type="PROSITE" id="PS50267">
    <property type="entry name" value="NA_NEUROTRAN_SYMP_3"/>
    <property type="match status" value="1"/>
</dbReference>
<gene>
    <name type="primary">SLC6A3</name>
    <name type="synonym">DAT1</name>
</gene>
<protein>
    <recommendedName>
        <fullName>Sodium-dependent dopamine transporter</fullName>
        <shortName>DA transporter</shortName>
        <shortName evidence="22 23 24">DAT</shortName>
    </recommendedName>
    <alternativeName>
        <fullName>Solute carrier family 6 member 3</fullName>
    </alternativeName>
</protein>
<reference key="1">
    <citation type="journal article" date="1992" name="Brain Res. Mol. Brain Res.">
        <title>A human dopamine transporter cDNA predicts reduced glycosylation, displays a novel repetitive element and provides racially-dimorphic TaqI RFLPs.</title>
        <authorList>
            <person name="Vandenbergh D.J."/>
            <person name="Persico A.M."/>
            <person name="Uhl G.R."/>
        </authorList>
    </citation>
    <scope>NUCLEOTIDE SEQUENCE [MRNA]</scope>
</reference>
<reference key="2">
    <citation type="journal article" date="1992" name="Mol. Pharmacol.">
        <title>Cloning, pharmacological characterization, and chromosome assignment of the human dopamine transporter.</title>
        <authorList>
            <person name="Giros B."/>
            <person name="el Mestikawy S."/>
            <person name="Godinot N."/>
            <person name="Zheng K."/>
            <person name="Han H."/>
            <person name="Yang-Feng T."/>
            <person name="Caron M.G."/>
        </authorList>
    </citation>
    <scope>NUCLEOTIDE SEQUENCE [MRNA]</scope>
    <scope>FUNCTION</scope>
    <scope>TRANSPORTER ACTIVITY</scope>
    <scope>ACTIVITY REGULATION</scope>
    <scope>BIOPHYSICOCHEMICAL PROPERTIES</scope>
    <source>
        <tissue>Brain</tissue>
    </source>
</reference>
<reference key="3">
    <citation type="journal article" date="1994" name="Mol. Pharmacol.">
        <title>Pharmacological heterogeneity of the cloned and native human dopamine transporter: disassociation of [3H]WIN 35,428 and [3H]GBR 12,935 binding.</title>
        <authorList>
            <person name="Pristupa Z.B."/>
            <person name="Wilson J.M."/>
            <person name="Hoffman B.J."/>
            <person name="Kish S.J."/>
            <person name="Niznik H.B."/>
        </authorList>
    </citation>
    <scope>NUCLEOTIDE SEQUENCE [MRNA]</scope>
    <scope>FUNCTION</scope>
    <scope>TRANSPORTER ACTIVITY</scope>
    <scope>ACTIVITY REGULATION</scope>
    <scope>BIOPHYSICOCHEMICAL PROPERTIES</scope>
    <source>
        <tissue>Brain</tissue>
    </source>
</reference>
<reference key="4">
    <citation type="journal article" date="1997" name="Gene">
        <title>Structure and organization of the gene encoding human dopamine transporter.</title>
        <authorList>
            <person name="Kawarai T."/>
            <person name="Kawakami H."/>
            <person name="Yamamura Y."/>
            <person name="Nakamura S."/>
        </authorList>
    </citation>
    <scope>NUCLEOTIDE SEQUENCE [GENOMIC DNA]</scope>
</reference>
<reference key="5">
    <citation type="journal article" date="2000" name="Mol. Psychiatry">
        <title>Human dopamine transporter gene: coding region conservation among normal, Tourette's disorder, alcohol dependence and attention-deficit hyperactivity disorder populations.</title>
        <authorList>
            <person name="Vandenbergh D.J."/>
            <person name="Thompson M.D."/>
            <person name="Cook E.H."/>
            <person name="Bendahhou E."/>
            <person name="Nguyen T."/>
            <person name="Krasowski M.D."/>
            <person name="Zarrabian D."/>
            <person name="Comings D."/>
            <person name="Sellers E.M."/>
            <person name="Tyndale R.F."/>
            <person name="George S.R."/>
            <person name="O'Dowd B.F."/>
            <person name="Uhl G.R."/>
        </authorList>
    </citation>
    <scope>NUCLEOTIDE SEQUENCE [GENOMIC DNA]</scope>
</reference>
<reference key="6">
    <citation type="journal article" date="2001" name="Am. J. Med. Genet.">
        <title>Evidence for linkage disequilibrium between the dopamine transporter and bipolar disorder.</title>
        <authorList>
            <person name="Greenwood T.A."/>
            <person name="Alexander M."/>
            <person name="Keck P.E."/>
            <person name="McElroy S."/>
            <person name="Sadovnick A.D."/>
            <person name="Remick R.A."/>
            <person name="Kelsoe J.R."/>
        </authorList>
    </citation>
    <scope>NUCLEOTIDE SEQUENCE [GENOMIC DNA]</scope>
</reference>
<reference key="7">
    <citation type="journal article" date="2008" name="Mol. Biol. Evol.">
        <title>Sequence variation in the primate dopamine transporter gene and its relationship to social dominance.</title>
        <authorList>
            <person name="Miller-Butterworth C.M."/>
            <person name="Kaplan J.R."/>
            <person name="Shaffer J."/>
            <person name="Devlin B."/>
            <person name="Manuck S.B."/>
            <person name="Ferrell R.E."/>
        </authorList>
    </citation>
    <scope>NUCLEOTIDE SEQUENCE [MRNA]</scope>
</reference>
<reference key="8">
    <citation type="submission" date="2004-05" db="EMBL/GenBank/DDBJ databases">
        <authorList>
            <consortium name="NIEHS SNPs program"/>
        </authorList>
    </citation>
    <scope>NUCLEOTIDE SEQUENCE [GENOMIC DNA]</scope>
</reference>
<reference key="9">
    <citation type="submission" date="2005-09" db="EMBL/GenBank/DDBJ databases">
        <authorList>
            <person name="Mural R.J."/>
            <person name="Istrail S."/>
            <person name="Sutton G."/>
            <person name="Florea L."/>
            <person name="Halpern A.L."/>
            <person name="Mobarry C.M."/>
            <person name="Lippert R."/>
            <person name="Walenz B."/>
            <person name="Shatkay H."/>
            <person name="Dew I."/>
            <person name="Miller J.R."/>
            <person name="Flanigan M.J."/>
            <person name="Edwards N.J."/>
            <person name="Bolanos R."/>
            <person name="Fasulo D."/>
            <person name="Halldorsson B.V."/>
            <person name="Hannenhalli S."/>
            <person name="Turner R."/>
            <person name="Yooseph S."/>
            <person name="Lu F."/>
            <person name="Nusskern D.R."/>
            <person name="Shue B.C."/>
            <person name="Zheng X.H."/>
            <person name="Zhong F."/>
            <person name="Delcher A.L."/>
            <person name="Huson D.H."/>
            <person name="Kravitz S.A."/>
            <person name="Mouchard L."/>
            <person name="Reinert K."/>
            <person name="Remington K.A."/>
            <person name="Clark A.G."/>
            <person name="Waterman M.S."/>
            <person name="Eichler E.E."/>
            <person name="Adams M.D."/>
            <person name="Hunkapiller M.W."/>
            <person name="Myers E.W."/>
            <person name="Venter J.C."/>
        </authorList>
    </citation>
    <scope>NUCLEOTIDE SEQUENCE [LARGE SCALE GENOMIC DNA]</scope>
</reference>
<reference key="10">
    <citation type="journal article" date="2004" name="Genome Res.">
        <title>The status, quality, and expansion of the NIH full-length cDNA project: the Mammalian Gene Collection (MGC).</title>
        <authorList>
            <consortium name="The MGC Project Team"/>
        </authorList>
    </citation>
    <scope>NUCLEOTIDE SEQUENCE [LARGE SCALE MRNA]</scope>
</reference>
<reference key="11">
    <citation type="journal article" date="1995" name="Brain Res. Mol. Brain Res.">
        <title>Human and mouse dopamine transporter genes: conservation of 5'-flanking sequence elements and gene structures.</title>
        <authorList>
            <person name="Donovan D.M."/>
            <person name="Vandenbergh D.J."/>
            <person name="Perry M.P."/>
            <person name="Bird G.S."/>
            <person name="Ingersoll R."/>
            <person name="Nanthakumar E."/>
            <person name="Uhl G.R."/>
        </authorList>
    </citation>
    <scope>PRELIMINARY NUCLEOTIDE SEQUENCE [GENOMIC DNA] OF 1-385</scope>
    <scope>TISSUE SPECIFICITY</scope>
</reference>
<reference key="12">
    <citation type="journal article" date="1992" name="Proc. Natl. Acad. Sci. U.S.A.">
        <title>Dopamine transporter mRNA content in human substantia nigra decreases precipitously with age.</title>
        <authorList>
            <person name="Bannon M.J."/>
            <person name="Poosch M.S."/>
            <person name="Xia Y."/>
            <person name="Goebel D.J."/>
            <person name="Cassin B."/>
            <person name="Kapatos G."/>
        </authorList>
    </citation>
    <scope>NUCLEOTIDE SEQUENCE [MRNA] OF 164-255</scope>
</reference>
<reference key="13">
    <citation type="journal article" date="1999" name="Gene">
        <title>Molecular cloning of the mouse dopamine transporter and pharmacological comparison with the human homologue.</title>
        <authorList>
            <person name="Wu X."/>
            <person name="Gu H.H."/>
        </authorList>
    </citation>
    <scope>FUNCTION</scope>
    <scope>TRANSPORTER ACTIVITY</scope>
    <scope>BIOPHYSICOCHEMICAL PROPERTIES</scope>
    <scope>ACTIVITY REGULATION</scope>
</reference>
<reference key="14">
    <citation type="journal article" date="2000" name="Mol. Pharmacol.">
        <title>Structural domains of chimeric dopamine-noradrenaline human transporters involved in the Na(+)- and Cl(-)-dependence of dopamine transport.</title>
        <authorList>
            <person name="Syringas M."/>
            <person name="Janin F."/>
            <person name="Mezghanni S."/>
            <person name="Giros B."/>
            <person name="Costentin J."/>
            <person name="Bonnet J.J."/>
        </authorList>
    </citation>
    <scope>FUNCTION</scope>
    <scope>TRANSPORTER ACTIVITY</scope>
    <scope>BIOPHYSICOCHEMICAL PROPERTIES</scope>
</reference>
<reference key="15">
    <citation type="journal article" date="2001" name="Neuron">
        <title>Functional interaction between monoamine plasma membrane transporters and the synaptic PDZ domain-containing protein PICK1.</title>
        <authorList>
            <person name="Torres G.E."/>
            <person name="Yao W.-D."/>
            <person name="Mohn A.R."/>
            <person name="Quan H."/>
            <person name="Kim K.-M."/>
            <person name="Levey A.I."/>
            <person name="Staudinger J."/>
            <person name="Caron M.G."/>
        </authorList>
    </citation>
    <scope>INTERACTION WITH PRKCABP</scope>
    <scope>SUBCELLULAR LOCATION</scope>
</reference>
<reference key="16">
    <citation type="journal article" date="2001" name="Abstr. - Soc. Neurosci.">
        <title>Symmetrical homodimer of the human dopamine transporter revealed by cross-linking Cys306 at the extracellular end of TM6.</title>
        <authorList>
            <person name="Hastrup H."/>
            <person name="Karlin A."/>
            <person name="Javitch J.A."/>
        </authorList>
    </citation>
    <scope>INTERCHAIN DISULFIDE BOND</scope>
    <scope>SUBUNIT</scope>
</reference>
<reference key="17">
    <citation type="journal article" date="2002" name="J. Neurosci.">
        <title>The multiple LIM domain-containing adaptor protein Hic-5 synaptically colocalizes and interacts with the dopamine transporter.</title>
        <authorList>
            <person name="Carneiro A.M.D."/>
            <person name="Ingram S.L."/>
            <person name="Beaulieu J.-M."/>
            <person name="Sweeney A."/>
            <person name="Amara S.G."/>
            <person name="Thomas S.M."/>
            <person name="Caron M.G."/>
            <person name="Torres G.E."/>
        </authorList>
    </citation>
    <scope>INTERACTION WITH TGFB1I1</scope>
</reference>
<reference key="18">
    <citation type="journal article" date="2004" name="Proc. Natl. Acad. Sci. U.S.A.">
        <title>Effect of torsinA on membrane proteins reveals a loss of function and a dominant-negative phenotype of the dystonia-associated DeltaE-torsinA mutant.</title>
        <authorList>
            <person name="Torres G.E."/>
            <person name="Sweeney A.L."/>
            <person name="Beaulieu J.M."/>
            <person name="Shashidharan P."/>
            <person name="Caron M.G."/>
        </authorList>
    </citation>
    <scope>FUNCTION AS DOPAMINE TRANSPORTER</scope>
    <scope>INTERACTION WITH TOR1A</scope>
    <scope>SUBCELLULAR LOCATION</scope>
    <scope>TRANSPORTER ACTIVITY</scope>
    <scope>BIOPHYSICOCHEMICAL PROPERTIES</scope>
</reference>
<reference key="19">
    <citation type="journal article" date="2007" name="Neuron">
        <title>Sept4, a component of presynaptic scaffold and Lewy bodies, is required for the suppression of alpha-synuclein neurotoxicity.</title>
        <authorList>
            <person name="Ihara M."/>
            <person name="Yamasaki N."/>
            <person name="Hagiwara A."/>
            <person name="Tanigaki A."/>
            <person name="Kitano A."/>
            <person name="Hikawa R."/>
            <person name="Tomimoto H."/>
            <person name="Noda M."/>
            <person name="Takanashi M."/>
            <person name="Mori H."/>
            <person name="Hattori N."/>
            <person name="Miyakawa T."/>
            <person name="Kinoshita M."/>
        </authorList>
    </citation>
    <scope>SUBCELLULAR LOCATION</scope>
    <scope>TISSUE SPECIFICITY</scope>
</reference>
<reference key="20">
    <citation type="journal article" date="2015" name="J. Biol. Chem.">
        <title>Dopamine Transporter Activity Is Modulated by alpha-Synuclein.</title>
        <authorList>
            <person name="Butler B."/>
            <person name="Saha K."/>
            <person name="Rana T."/>
            <person name="Becker J.P."/>
            <person name="Sambo D."/>
            <person name="Davari P."/>
            <person name="Goodwin J.S."/>
            <person name="Khoshbouei H."/>
        </authorList>
    </citation>
    <scope>INTERACTION WITH ALPHA-SYNUCLEIN/SNCA</scope>
</reference>
<reference key="21">
    <citation type="journal article" date="1999" name="Nat. Genet.">
        <title>Characterization of single-nucleotide polymorphisms in coding regions of human genes.</title>
        <authorList>
            <person name="Cargill M."/>
            <person name="Altshuler D."/>
            <person name="Ireland J."/>
            <person name="Sklar P."/>
            <person name="Ardlie K."/>
            <person name="Patil N."/>
            <person name="Shaw N."/>
            <person name="Lane C.R."/>
            <person name="Lim E.P."/>
            <person name="Kalyanaraman N."/>
            <person name="Nemesh J."/>
            <person name="Ziaugra L."/>
            <person name="Friedland L."/>
            <person name="Rolfe A."/>
            <person name="Warrington J."/>
            <person name="Lipshutz R."/>
            <person name="Daley G.Q."/>
            <person name="Lander E.S."/>
        </authorList>
    </citation>
    <scope>VARIANT GLN-237</scope>
</reference>
<reference key="22">
    <citation type="journal article" date="1999" name="Nat. Genet.">
        <authorList>
            <person name="Cargill M."/>
            <person name="Altshuler D."/>
            <person name="Ireland J."/>
            <person name="Sklar P."/>
            <person name="Ardlie K."/>
            <person name="Patil N."/>
            <person name="Shaw N."/>
            <person name="Lane C.R."/>
            <person name="Lim E.P."/>
            <person name="Kalyanaraman N."/>
            <person name="Nemesh J."/>
            <person name="Ziaugra L."/>
            <person name="Friedland L."/>
            <person name="Rolfe A."/>
            <person name="Warrington J."/>
            <person name="Lipshutz R."/>
            <person name="Daley G.Q."/>
            <person name="Lander E.S."/>
        </authorList>
    </citation>
    <scope>ERRATUM OF PUBMED:10391209</scope>
</reference>
<reference key="23">
    <citation type="journal article" date="2006" name="Science">
        <title>The consensus coding sequences of human breast and colorectal cancers.</title>
        <authorList>
            <person name="Sjoeblom T."/>
            <person name="Jones S."/>
            <person name="Wood L.D."/>
            <person name="Parsons D.W."/>
            <person name="Lin J."/>
            <person name="Barber T.D."/>
            <person name="Mandelker D."/>
            <person name="Leary R.J."/>
            <person name="Ptak J."/>
            <person name="Silliman N."/>
            <person name="Szabo S."/>
            <person name="Buckhaults P."/>
            <person name="Farrell C."/>
            <person name="Meeh P."/>
            <person name="Markowitz S.D."/>
            <person name="Willis J."/>
            <person name="Dawson D."/>
            <person name="Willson J.K.V."/>
            <person name="Gazdar A.F."/>
            <person name="Hartigan J."/>
            <person name="Wu L."/>
            <person name="Liu C."/>
            <person name="Parmigiani G."/>
            <person name="Park B.H."/>
            <person name="Bachman K.E."/>
            <person name="Papadopoulos N."/>
            <person name="Vogelstein B."/>
            <person name="Kinzler K.W."/>
            <person name="Velculescu V.E."/>
        </authorList>
    </citation>
    <scope>VARIANTS [LARGE SCALE ANALYSIS] SER-121 AND SER-544</scope>
</reference>
<reference key="24">
    <citation type="journal article" date="2009" name="J. Clin. Invest.">
        <title>Homozygous loss-of-function mutations in the gene encoding the dopamine transporter are associated with infantile parkinsonism-dystonia.</title>
        <authorList>
            <person name="Kurian M.A."/>
            <person name="Zhen J."/>
            <person name="Cheng S.Y."/>
            <person name="Li Y."/>
            <person name="Mordekar S.R."/>
            <person name="Jardine P."/>
            <person name="Morgan N.V."/>
            <person name="Meyer E."/>
            <person name="Tee L."/>
            <person name="Pasha S."/>
            <person name="Wassmer E."/>
            <person name="Heales S.J."/>
            <person name="Gissen P."/>
            <person name="Reith M.E."/>
            <person name="Maher E.R."/>
        </authorList>
    </citation>
    <scope>VARIANTS PKDYS1 GLN-368 AND LEU-395</scope>
    <scope>CHARACTERIZATION OF VARIANTS PKDYS1 GLN-368 AND LEU-395</scope>
    <scope>FUNCTION</scope>
    <scope>TRANSPORTER ACTIVITY</scope>
</reference>
<reference key="25">
    <citation type="journal article" date="2010" name="Nature">
        <title>A population-specific HTR2B stop codon predisposes to severe impulsivity.</title>
        <authorList>
            <person name="Bevilacqua L."/>
            <person name="Doly S."/>
            <person name="Kaprio J."/>
            <person name="Yuan Q."/>
            <person name="Tikkanen R."/>
            <person name="Paunio T."/>
            <person name="Zhou Z."/>
            <person name="Wedenoja J."/>
            <person name="Maroteaux L."/>
            <person name="Diaz S."/>
            <person name="Belmer A."/>
            <person name="Hodgkinson C.A."/>
            <person name="Dell'osso L."/>
            <person name="Suvisaari J."/>
            <person name="Coccaro E."/>
            <person name="Rose R.J."/>
            <person name="Peltonen L."/>
            <person name="Virkkunen M."/>
            <person name="Goldman D."/>
        </authorList>
    </citation>
    <scope>VARIANT ILE-471</scope>
</reference>
<reference evidence="26" key="26">
    <citation type="journal article" date="2024" name="Nature">
        <title>Structure of the human dopamine transporter and mechanisms of inhibition.</title>
        <authorList>
            <person name="Srivastava D.K."/>
            <person name="Navratna V."/>
            <person name="Tosh D.K."/>
            <person name="Chinn A."/>
            <person name="Sk M.F."/>
            <person name="Tajkhorshid E."/>
            <person name="Jacobson K.A."/>
            <person name="Gouaux E."/>
        </authorList>
    </citation>
    <scope>STRUCTURE BY ELECTRON MICROSCOPY (3.19 ANGSTROMS) OF 57-620 IN COMPLEX WITH SODIUM; ZINC; INHIBITOR AND COCAINE ANALOG</scope>
    <scope>FUNCTION</scope>
    <scope>TRANSPORTER ACTIVITY</scope>
    <scope>ACTIVITY REGULATION</scope>
    <scope>SUBUNIT</scope>
    <scope>SUBCELLULAR LOCATION</scope>
    <scope>TOPOLOGY</scope>
    <scope>DISULFIDE BONDS</scope>
    <scope>MUTAGENESIS OF THR-211; VAL-364; ILE-390; TYR-394 AND MET-414</scope>
</reference>
<reference evidence="32" key="27">
    <citation type="journal article" date="2024" name="Nature">
        <title>Structure of the human dopamine transporter in complex with cocaine.</title>
        <authorList>
            <person name="Nielsen J.C."/>
            <person name="Salomon K."/>
            <person name="Kalenderoglou I.E."/>
            <person name="Bargmeyer S."/>
            <person name="Pape T."/>
            <person name="Shahsavar A."/>
            <person name="Loland C.J."/>
        </authorList>
    </citation>
    <scope>STRUCTURE BY ELECTRON MICROSCOPY (2.66 ANGSTROMS) IN COMPLEX WITH SODIUM; CHLORIDE AND COCAINE</scope>
    <scope>FUNCTION</scope>
    <scope>TRANSPORTER ACTIVITY</scope>
    <scope>ACTIVITY REGULATION</scope>
    <scope>SUBUNIT</scope>
    <scope>SUBCELLULAR LOCATION</scope>
    <scope>TOPOLOGY</scope>
    <scope>DISULFIDE BONDS</scope>
</reference>
<reference evidence="27 28 29 30 31" key="28">
    <citation type="journal article" date="2024" name="Nature">
        <title>Dopamine reuptake and inhibitory mechanisms in human dopamine transporter.</title>
        <authorList>
            <person name="Li Y."/>
            <person name="Wang X."/>
            <person name="Meng Y."/>
            <person name="Hu T."/>
            <person name="Zhao J."/>
            <person name="Li R."/>
            <person name="Bai Q."/>
            <person name="Yuan P."/>
            <person name="Han J."/>
            <person name="Hao K."/>
            <person name="Wei Y."/>
            <person name="Qiu Y."/>
            <person name="Li N."/>
            <person name="Zhao Y."/>
        </authorList>
    </citation>
    <scope>STRUCTURE BY ELECTRON MICROSCOPY (2.80 ANGSTROMS) OF 68-620 IN COMPLEXES WITH SODIUM; CHLORIDE; DOPAMINE; INHIBITORS AMPHETAMINE AND BENZTROPINE</scope>
    <scope>FUNCTION</scope>
    <scope>TRANSPORTER ACTIVITY</scope>
    <scope>ACTIVITY REGULATION</scope>
    <scope>SUBUNIT</scope>
    <scope>SUBCELLULAR LOCATION</scope>
    <scope>GLYCOSYLATION AT ASN-181 AND ASN-188</scope>
    <scope>TOPOLOGY</scope>
    <scope>DISULFIDE BONDS</scope>
    <scope>MUTAGENESIS OF ASP-79; VAL-152; GLN-317; PHE-320; SER-321; PHE-326; ASN-353; SER-357; ASP-421; SER-422 AND GLY-426</scope>
</reference>
<feature type="chain" id="PRO_0000214751" description="Sodium-dependent dopamine transporter">
    <location>
        <begin position="1"/>
        <end position="620"/>
    </location>
</feature>
<feature type="topological domain" description="Cytoplasmic" evidence="16 17 18 26 27 28 29 30 31 32">
    <location>
        <begin position="1"/>
        <end position="56"/>
    </location>
</feature>
<feature type="transmembrane region" description="Discontinuously helical; Name=1" evidence="16 17 18 26 27 28 29 30 31 32">
    <location>
        <begin position="57"/>
        <end position="95"/>
    </location>
</feature>
<feature type="transmembrane region" description="Helical; Name=2" evidence="16 17 18 26 27 28 29 30 31 32">
    <location>
        <begin position="96"/>
        <end position="127"/>
    </location>
</feature>
<feature type="transmembrane region" description="Helical; Name=3" evidence="16 17 18 26 27 28 29 30 31 32">
    <location>
        <begin position="128"/>
        <end position="171"/>
    </location>
</feature>
<feature type="topological domain" description="Extracellular" evidence="16 17 18 26 27 28 29 30 31 32">
    <location>
        <begin position="172"/>
        <end position="236"/>
    </location>
</feature>
<feature type="transmembrane region" description="Helical; Name=4" evidence="16 17 18 26 27 28 29 30 31 32">
    <location>
        <begin position="237"/>
        <end position="256"/>
    </location>
</feature>
<feature type="transmembrane region" description="Helical; Name=5" evidence="16 17 18 26 27 28 29 30 31 32">
    <location>
        <begin position="257"/>
        <end position="287"/>
    </location>
</feature>
<feature type="topological domain" description="Extracellular" evidence="16 17 18 26 27 28 29 30 31 32">
    <location>
        <begin position="288"/>
        <end position="306"/>
    </location>
</feature>
<feature type="transmembrane region" description="Discontinuously helical; Name=6" evidence="16 17 18 26 27 28 29 30 31 32">
    <location>
        <begin position="307"/>
        <end position="335"/>
    </location>
</feature>
<feature type="transmembrane region" description="Helical; Name=7" evidence="16 17 18 26 27 28 29 30 31 32">
    <location>
        <begin position="336"/>
        <end position="376"/>
    </location>
</feature>
<feature type="topological domain" description="Extracellular" evidence="16 17 18 26 27 28 29 30 31 32">
    <location>
        <begin position="377"/>
        <end position="400"/>
    </location>
</feature>
<feature type="transmembrane region" description="Helical; Name=8" evidence="16 17 18 26 27 28 29 30 31 32">
    <location>
        <begin position="401"/>
        <end position="442"/>
    </location>
</feature>
<feature type="transmembrane region" description="Helical; Name=9" evidence="16 17 18 26 27 28 29 30 31 32">
    <location>
        <begin position="443"/>
        <end position="466"/>
    </location>
</feature>
<feature type="transmembrane region" description="Helical; Name=10" evidence="16 17 18 26 27 28 29 30 31 32">
    <location>
        <begin position="467"/>
        <end position="499"/>
    </location>
</feature>
<feature type="topological domain" description="Cytoplasmic" evidence="16 17 18 26 27 28 29 30 31 32">
    <location>
        <begin position="500"/>
        <end position="516"/>
    </location>
</feature>
<feature type="transmembrane region" description="Helical; Name=11" evidence="16 17 18 26 27 28 29 30 31 32">
    <location>
        <begin position="517"/>
        <end position="542"/>
    </location>
</feature>
<feature type="topological domain" description="Extracellular" evidence="16 17 18 26 27 28 29 30 31 32">
    <location>
        <begin position="543"/>
        <end position="553"/>
    </location>
</feature>
<feature type="transmembrane region" description="Helical; Name=12" evidence="16 17 18 26 27 28 29 30 31 32">
    <location>
        <begin position="554"/>
        <end position="583"/>
    </location>
</feature>
<feature type="topological domain" description="Cytoplasmic" evidence="16 17 18 26 27 28 29 30 31 32">
    <location>
        <begin position="584"/>
        <end position="620"/>
    </location>
</feature>
<feature type="region of interest" description="Interaction with TGFB1I1" evidence="8">
    <location>
        <begin position="561"/>
        <end position="590"/>
    </location>
</feature>
<feature type="binding site" evidence="17 18 26 32">
    <location>
        <position position="75"/>
    </location>
    <ligand>
        <name>Na(+)</name>
        <dbReference type="ChEBI" id="CHEBI:29101"/>
        <label>1</label>
    </ligand>
</feature>
<feature type="binding site" evidence="16 28 31">
    <location>
        <position position="77"/>
    </location>
    <ligand>
        <name>Na(+)</name>
        <dbReference type="ChEBI" id="CHEBI:29101"/>
        <label>2</label>
    </ligand>
</feature>
<feature type="binding site" evidence="17 18 26 32">
    <location>
        <position position="78"/>
    </location>
    <ligand>
        <name>Na(+)</name>
        <dbReference type="ChEBI" id="CHEBI:29101"/>
        <label>1</label>
    </ligand>
</feature>
<feature type="binding site" evidence="16 28">
    <location>
        <position position="79"/>
    </location>
    <ligand>
        <name>dopamine</name>
        <dbReference type="ChEBI" id="CHEBI:59905"/>
    </ligand>
</feature>
<feature type="binding site" evidence="17 18 26 32">
    <location>
        <position position="79"/>
    </location>
    <ligand>
        <name>Na(+)</name>
        <dbReference type="ChEBI" id="CHEBI:29101"/>
        <label>1</label>
    </ligand>
</feature>
<feature type="binding site" evidence="16 28 31">
    <location>
        <position position="79"/>
    </location>
    <ligand>
        <name>Na(+)</name>
        <dbReference type="ChEBI" id="CHEBI:29101"/>
        <label>2</label>
    </ligand>
</feature>
<feature type="binding site" evidence="16 28 31">
    <location>
        <position position="82"/>
    </location>
    <ligand>
        <name>Na(+)</name>
        <dbReference type="ChEBI" id="CHEBI:29101"/>
        <label>2</label>
    </ligand>
</feature>
<feature type="binding site" evidence="16 28">
    <location>
        <position position="149"/>
    </location>
    <ligand>
        <name>dopamine</name>
        <dbReference type="ChEBI" id="CHEBI:59905"/>
    </ligand>
</feature>
<feature type="binding site" evidence="16 28">
    <location>
        <position position="153"/>
    </location>
    <ligand>
        <name>dopamine</name>
        <dbReference type="ChEBI" id="CHEBI:59905"/>
    </ligand>
</feature>
<feature type="binding site" evidence="16 17 28 31 32">
    <location>
        <position position="317"/>
    </location>
    <ligand>
        <name>chloride</name>
        <dbReference type="ChEBI" id="CHEBI:17996"/>
    </ligand>
</feature>
<feature type="binding site" evidence="16 28">
    <location>
        <position position="320"/>
    </location>
    <ligand>
        <name>dopamine</name>
        <dbReference type="ChEBI" id="CHEBI:59905"/>
    </ligand>
</feature>
<feature type="binding site" evidence="16 17 28 31 32">
    <location>
        <position position="321"/>
    </location>
    <ligand>
        <name>chloride</name>
        <dbReference type="ChEBI" id="CHEBI:17996"/>
    </ligand>
</feature>
<feature type="binding site" evidence="16 28 31">
    <location>
        <position position="321"/>
    </location>
    <ligand>
        <name>Na(+)</name>
        <dbReference type="ChEBI" id="CHEBI:29101"/>
        <label>2</label>
    </ligand>
</feature>
<feature type="binding site" evidence="16 28 31">
    <location>
        <position position="353"/>
    </location>
    <ligand>
        <name>Na(+)</name>
        <dbReference type="ChEBI" id="CHEBI:29101"/>
        <label>2</label>
    </ligand>
</feature>
<feature type="binding site" evidence="16 17 28 31 32">
    <location>
        <position position="357"/>
    </location>
    <ligand>
        <name>chloride</name>
        <dbReference type="ChEBI" id="CHEBI:17996"/>
    </ligand>
</feature>
<feature type="binding site" evidence="17 18 26 32">
    <location>
        <position position="418"/>
    </location>
    <ligand>
        <name>Na(+)</name>
        <dbReference type="ChEBI" id="CHEBI:29101"/>
        <label>1</label>
    </ligand>
</feature>
<feature type="binding site" evidence="17 18 26 32">
    <location>
        <position position="421"/>
    </location>
    <ligand>
        <name>Na(+)</name>
        <dbReference type="ChEBI" id="CHEBI:29101"/>
        <label>1</label>
    </ligand>
</feature>
<feature type="binding site" evidence="16 28">
    <location>
        <position position="422"/>
    </location>
    <ligand>
        <name>dopamine</name>
        <dbReference type="ChEBI" id="CHEBI:59905"/>
    </ligand>
</feature>
<feature type="binding site" evidence="17 18 26 32">
    <location>
        <position position="422"/>
    </location>
    <ligand>
        <name>Na(+)</name>
        <dbReference type="ChEBI" id="CHEBI:29101"/>
        <label>1</label>
    </ligand>
</feature>
<feature type="binding site" evidence="16 28">
    <location>
        <position position="423"/>
    </location>
    <ligand>
        <name>dopamine</name>
        <dbReference type="ChEBI" id="CHEBI:59905"/>
    </ligand>
</feature>
<feature type="site" description="Contributes to high-affinity binding to cocaine" evidence="2">
    <location>
        <position position="105"/>
    </location>
</feature>
<feature type="glycosylation site" description="N-linked (GlcNAc...) asparagine" evidence="16 27 29 30 31">
    <location>
        <position position="181"/>
    </location>
</feature>
<feature type="glycosylation site" description="N-linked (GlcNAc...) asparagine" evidence="16 27 29 30 31">
    <location>
        <position position="188"/>
    </location>
</feature>
<feature type="glycosylation site" description="N-linked (GlcNAc...) asparagine" evidence="3">
    <location>
        <position position="205"/>
    </location>
</feature>
<feature type="disulfide bond" evidence="16 17 18 26 27 28 29 30 31 32">
    <location>
        <begin position="180"/>
        <end position="189"/>
    </location>
</feature>
<feature type="disulfide bond" description="Interchain" evidence="21">
    <location>
        <position position="306"/>
    </location>
</feature>
<feature type="sequence variant" id="VAR_036158" description="In a breast cancer sample; somatic mutation; dbSNP:rs760871529." evidence="11">
    <original>G</original>
    <variation>S</variation>
    <location>
        <position position="121"/>
    </location>
</feature>
<feature type="sequence variant" id="VAR_014180" description="In dbSNP:rs6345." evidence="5">
    <original>R</original>
    <variation>Q</variation>
    <location>
        <position position="237"/>
    </location>
</feature>
<feature type="sequence variant" id="VAR_063771" description="In PKDYS1; loss of dopamine:sodium symporter activity; dbSNP:rs267607068." evidence="13">
    <original>L</original>
    <variation>Q</variation>
    <location>
        <position position="368"/>
    </location>
</feature>
<feature type="sequence variant" id="VAR_063772" description="In PKDYS1; loss of dopamine:sodium symporter activity; dbSNP:rs267607069." evidence="13">
    <original>P</original>
    <variation>L</variation>
    <location>
        <position position="395"/>
    </location>
</feature>
<feature type="sequence variant" id="VAR_064580" description="In dbSNP:rs75916702." evidence="14">
    <original>V</original>
    <variation>I</variation>
    <location>
        <position position="471"/>
    </location>
</feature>
<feature type="sequence variant" id="VAR_036159" description="In a breast cancer sample; somatic mutation." evidence="11">
    <original>R</original>
    <variation>S</variation>
    <location>
        <position position="544"/>
    </location>
</feature>
<feature type="mutagenesis site" description="Abolishes dopamine uptake." evidence="16">
    <original>D</original>
    <variation>A</variation>
    <location>
        <position position="79"/>
    </location>
</feature>
<feature type="mutagenesis site" description="Reduces dopamine uptake." evidence="16">
    <original>V</original>
    <variation>I</variation>
    <location>
        <position position="152"/>
    </location>
</feature>
<feature type="mutagenesis site" description="Enhances the inhibition on dopamine uptake by zinc ions." evidence="18">
    <original>T</original>
    <variation>E</variation>
    <variation>H</variation>
    <location>
        <position position="211"/>
    </location>
</feature>
<feature type="mutagenesis site" description="Reduces dopamine uptake. Reduces glycosylation and cell surface expression." evidence="16">
    <original>Q</original>
    <variation>A</variation>
    <location>
        <position position="317"/>
    </location>
</feature>
<feature type="mutagenesis site" description="Reduces dopamine uptake. Reduces glycosylation and cell surface expression." evidence="16">
    <original>F</original>
    <variation>A</variation>
    <location>
        <position position="320"/>
    </location>
</feature>
<feature type="mutagenesis site" description="Reduces dopamine uptake. Reduces glycosylation and cell surface expression." evidence="16">
    <original>S</original>
    <variation>A</variation>
    <location>
        <position position="321"/>
    </location>
</feature>
<feature type="mutagenesis site" description="Reduces the inhibition on dopamine uptake by amphetamine. Reduces dopamine uptake. Reduces glycosylation and cell surface expression." evidence="16">
    <original>F</original>
    <variation>A</variation>
    <location>
        <position position="326"/>
    </location>
</feature>
<feature type="mutagenesis site" description="Reduces dopamine uptake. Reduces glycosylation and cell surface expression." evidence="16">
    <original>N</original>
    <variation>A</variation>
    <location>
        <position position="353"/>
    </location>
</feature>
<feature type="mutagenesis site" description="Reduces dopamine uptake. Reduces glycosylation and cell surface expression." evidence="16">
    <original>S</original>
    <variation>A</variation>
    <location>
        <position position="357"/>
    </location>
</feature>
<feature type="mutagenesis site" description="No effect on dopamine uptake. Reduces dopamine uptake; when associated with L-390." evidence="18">
    <original>V</original>
    <variation>I</variation>
    <location>
        <position position="364"/>
    </location>
</feature>
<feature type="mutagenesis site" description="Reduces dopamine uptake. Reduces dopamine uptake; when associated with I-364." evidence="18">
    <original>I</original>
    <variation>L</variation>
    <location>
        <position position="390"/>
    </location>
</feature>
<feature type="mutagenesis site" description="Reduces dopamine uptake." evidence="18">
    <original>Y</original>
    <variation>F</variation>
    <location>
        <position position="394"/>
    </location>
</feature>
<feature type="mutagenesis site" description="Reduces dopamine uptake." evidence="18">
    <original>M</original>
    <variation>L</variation>
    <location>
        <position position="414"/>
    </location>
</feature>
<feature type="mutagenesis site" description="Reduces dopamine uptake. Reduces glycosylation and cell surface expression." evidence="16">
    <original>D</original>
    <variation>A</variation>
    <location>
        <position position="421"/>
    </location>
</feature>
<feature type="mutagenesis site" description="Reduces the inhibition on dopamine uptake by amphetamine. Reduces dopamine uptake. Reduces glycosylation and cell surface expression." evidence="16">
    <original>S</original>
    <variation>A</variation>
    <location>
        <position position="422"/>
    </location>
</feature>
<feature type="mutagenesis site" description="Reduces dopamine uptake. Reduces glycosylation and cell surface expression." evidence="16">
    <original>G</original>
    <variation>A</variation>
    <location>
        <position position="426"/>
    </location>
</feature>
<feature type="sequence conflict" description="In Ref. 2; AAB23443." evidence="25" ref="2">
    <original>K</original>
    <variation>M</variation>
    <location>
        <position position="35"/>
    </location>
</feature>
<feature type="sequence conflict" description="In Ref. 2; AAB23443." evidence="25" ref="2">
    <original>S</original>
    <variation>C</variation>
    <location>
        <position position="354"/>
    </location>
</feature>
<feature type="helix" evidence="35">
    <location>
        <begin position="66"/>
        <end position="77"/>
    </location>
</feature>
<feature type="helix" evidence="35">
    <location>
        <begin position="80"/>
        <end position="84"/>
    </location>
</feature>
<feature type="helix" evidence="35">
    <location>
        <begin position="86"/>
        <end position="92"/>
    </location>
</feature>
<feature type="helix" evidence="35">
    <location>
        <begin position="96"/>
        <end position="98"/>
    </location>
</feature>
<feature type="helix" evidence="35">
    <location>
        <begin position="99"/>
        <end position="108"/>
    </location>
</feature>
<feature type="helix" evidence="35">
    <location>
        <begin position="110"/>
        <end position="124"/>
    </location>
</feature>
<feature type="turn" evidence="35">
    <location>
        <begin position="128"/>
        <end position="133"/>
    </location>
</feature>
<feature type="helix" evidence="35">
    <location>
        <begin position="136"/>
        <end position="139"/>
    </location>
</feature>
<feature type="helix" evidence="35">
    <location>
        <begin position="140"/>
        <end position="152"/>
    </location>
</feature>
<feature type="turn" evidence="35">
    <location>
        <begin position="153"/>
        <end position="155"/>
    </location>
</feature>
<feature type="helix" evidence="35">
    <location>
        <begin position="156"/>
        <end position="168"/>
    </location>
</feature>
<feature type="strand" evidence="35">
    <location>
        <begin position="171"/>
        <end position="174"/>
    </location>
</feature>
<feature type="strand" evidence="34">
    <location>
        <begin position="176"/>
        <end position="178"/>
    </location>
</feature>
<feature type="helix" evidence="35">
    <location>
        <begin position="212"/>
        <end position="219"/>
    </location>
</feature>
<feature type="helix" evidence="35">
    <location>
        <begin position="224"/>
        <end position="226"/>
    </location>
</feature>
<feature type="strand" evidence="34">
    <location>
        <begin position="229"/>
        <end position="231"/>
    </location>
</feature>
<feature type="helix" evidence="35">
    <location>
        <begin position="238"/>
        <end position="255"/>
    </location>
</feature>
<feature type="helix" evidence="35">
    <location>
        <begin position="259"/>
        <end position="269"/>
    </location>
</feature>
<feature type="helix" evidence="35">
    <location>
        <begin position="272"/>
        <end position="285"/>
    </location>
</feature>
<feature type="helix" evidence="35">
    <location>
        <begin position="290"/>
        <end position="298"/>
    </location>
</feature>
<feature type="helix" evidence="35">
    <location>
        <begin position="302"/>
        <end position="306"/>
    </location>
</feature>
<feature type="helix" evidence="35">
    <location>
        <begin position="308"/>
        <end position="321"/>
    </location>
</feature>
<feature type="turn" evidence="33">
    <location>
        <begin position="323"/>
        <end position="325"/>
    </location>
</feature>
<feature type="helix" evidence="35">
    <location>
        <begin position="328"/>
        <end position="333"/>
    </location>
</feature>
<feature type="helix" evidence="35">
    <location>
        <begin position="342"/>
        <end position="375"/>
    </location>
</feature>
<feature type="helix" evidence="35">
    <location>
        <begin position="379"/>
        <end position="382"/>
    </location>
</feature>
<feature type="helix" evidence="35">
    <location>
        <begin position="389"/>
        <end position="399"/>
    </location>
</feature>
<feature type="strand" evidence="33">
    <location>
        <begin position="401"/>
        <end position="403"/>
    </location>
</feature>
<feature type="helix" evidence="35">
    <location>
        <begin position="404"/>
        <end position="437"/>
    </location>
</feature>
<feature type="helix" evidence="35">
    <location>
        <begin position="439"/>
        <end position="441"/>
    </location>
</feature>
<feature type="helix" evidence="35">
    <location>
        <begin position="445"/>
        <end position="459"/>
    </location>
</feature>
<feature type="helix" evidence="35">
    <location>
        <begin position="460"/>
        <end position="462"/>
    </location>
</feature>
<feature type="helix" evidence="35">
    <location>
        <begin position="468"/>
        <end position="478"/>
    </location>
</feature>
<feature type="strand" evidence="34">
    <location>
        <begin position="479"/>
        <end position="481"/>
    </location>
</feature>
<feature type="helix" evidence="35">
    <location>
        <begin position="482"/>
        <end position="496"/>
    </location>
</feature>
<feature type="turn" evidence="35">
    <location>
        <begin position="497"/>
        <end position="500"/>
    </location>
</feature>
<feature type="helix" evidence="35">
    <location>
        <begin position="501"/>
        <end position="512"/>
    </location>
</feature>
<feature type="helix" evidence="35">
    <location>
        <begin position="518"/>
        <end position="525"/>
    </location>
</feature>
<feature type="helix" evidence="35">
    <location>
        <begin position="527"/>
        <end position="541"/>
    </location>
</feature>
<feature type="helix" evidence="35">
    <location>
        <begin position="555"/>
        <end position="569"/>
    </location>
</feature>
<feature type="helix" evidence="35">
    <location>
        <begin position="571"/>
        <end position="582"/>
    </location>
</feature>
<feature type="helix" evidence="35">
    <location>
        <begin position="587"/>
        <end position="595"/>
    </location>
</feature>
<feature type="helix" evidence="35">
    <location>
        <begin position="598"/>
        <end position="600"/>
    </location>
</feature>
<feature type="helix" evidence="35">
    <location>
        <begin position="601"/>
        <end position="606"/>
    </location>
</feature>
<feature type="helix" evidence="35">
    <location>
        <begin position="610"/>
        <end position="612"/>
    </location>
</feature>
<feature type="helix" evidence="35">
    <location>
        <begin position="614"/>
        <end position="618"/>
    </location>
</feature>